<comment type="function">
    <text evidence="1">Catalyzes the transfer of a ribosyl phosphate group from 5-phosphoribose 1-diphosphate to orotate, leading to the formation of orotidine monophosphate (OMP).</text>
</comment>
<comment type="catalytic activity">
    <reaction evidence="1">
        <text>orotidine 5'-phosphate + diphosphate = orotate + 5-phospho-alpha-D-ribose 1-diphosphate</text>
        <dbReference type="Rhea" id="RHEA:10380"/>
        <dbReference type="ChEBI" id="CHEBI:30839"/>
        <dbReference type="ChEBI" id="CHEBI:33019"/>
        <dbReference type="ChEBI" id="CHEBI:57538"/>
        <dbReference type="ChEBI" id="CHEBI:58017"/>
        <dbReference type="EC" id="2.4.2.10"/>
    </reaction>
</comment>
<comment type="cofactor">
    <cofactor evidence="1">
        <name>Mg(2+)</name>
        <dbReference type="ChEBI" id="CHEBI:18420"/>
    </cofactor>
</comment>
<comment type="pathway">
    <text evidence="1">Pyrimidine metabolism; UMP biosynthesis via de novo pathway; UMP from orotate: step 1/2.</text>
</comment>
<comment type="subunit">
    <text evidence="1">Homodimer.</text>
</comment>
<comment type="similarity">
    <text evidence="1">Belongs to the purine/pyrimidine phosphoribosyltransferase family. PyrE subfamily.</text>
</comment>
<sequence length="215" mass="23188">MEKYQSDFIQLAIKHQALCFGEFVLKSGRTSPYFFNAGRFQTGSALAELGRHYAAAITAAGVDFDVVFGPAYKGIPLAAATAIALADEFGRDLPYCYNRKEAKDHGEGGTLVGAPLKGRILIVDDVITAGTAVREVMGIIQQAGAQPAAVLIGLNRQEKGRGELSAIQEVEQNFGVPVISIINLNHIIHYLEHQPGQAALVDRIKSYRATYGVEL</sequence>
<name>PYRE_CELJU</name>
<keyword id="KW-0328">Glycosyltransferase</keyword>
<keyword id="KW-0460">Magnesium</keyword>
<keyword id="KW-0665">Pyrimidine biosynthesis</keyword>
<keyword id="KW-1185">Reference proteome</keyword>
<keyword id="KW-0808">Transferase</keyword>
<proteinExistence type="inferred from homology"/>
<feature type="chain" id="PRO_1000164678" description="Orotate phosphoribosyltransferase">
    <location>
        <begin position="1"/>
        <end position="215"/>
    </location>
</feature>
<feature type="binding site" description="in other chain" evidence="1">
    <location>
        <position position="26"/>
    </location>
    <ligand>
        <name>5-phospho-alpha-D-ribose 1-diphosphate</name>
        <dbReference type="ChEBI" id="CHEBI:58017"/>
        <note>ligand shared between dimeric partners</note>
    </ligand>
</feature>
<feature type="binding site" evidence="1">
    <location>
        <begin position="34"/>
        <end position="35"/>
    </location>
    <ligand>
        <name>orotate</name>
        <dbReference type="ChEBI" id="CHEBI:30839"/>
    </ligand>
</feature>
<feature type="binding site" description="in other chain" evidence="1">
    <location>
        <begin position="72"/>
        <end position="73"/>
    </location>
    <ligand>
        <name>5-phospho-alpha-D-ribose 1-diphosphate</name>
        <dbReference type="ChEBI" id="CHEBI:58017"/>
        <note>ligand shared between dimeric partners</note>
    </ligand>
</feature>
<feature type="binding site" evidence="1">
    <location>
        <position position="99"/>
    </location>
    <ligand>
        <name>5-phospho-alpha-D-ribose 1-diphosphate</name>
        <dbReference type="ChEBI" id="CHEBI:58017"/>
        <note>ligand shared between dimeric partners</note>
    </ligand>
</feature>
<feature type="binding site" description="in other chain" evidence="1">
    <location>
        <position position="100"/>
    </location>
    <ligand>
        <name>5-phospho-alpha-D-ribose 1-diphosphate</name>
        <dbReference type="ChEBI" id="CHEBI:58017"/>
        <note>ligand shared between dimeric partners</note>
    </ligand>
</feature>
<feature type="binding site" evidence="1">
    <location>
        <position position="103"/>
    </location>
    <ligand>
        <name>5-phospho-alpha-D-ribose 1-diphosphate</name>
        <dbReference type="ChEBI" id="CHEBI:58017"/>
        <note>ligand shared between dimeric partners</note>
    </ligand>
</feature>
<feature type="binding site" evidence="1">
    <location>
        <position position="105"/>
    </location>
    <ligand>
        <name>5-phospho-alpha-D-ribose 1-diphosphate</name>
        <dbReference type="ChEBI" id="CHEBI:58017"/>
        <note>ligand shared between dimeric partners</note>
    </ligand>
</feature>
<feature type="binding site" description="in other chain" evidence="1">
    <location>
        <begin position="124"/>
        <end position="132"/>
    </location>
    <ligand>
        <name>5-phospho-alpha-D-ribose 1-diphosphate</name>
        <dbReference type="ChEBI" id="CHEBI:58017"/>
        <note>ligand shared between dimeric partners</note>
    </ligand>
</feature>
<feature type="binding site" evidence="1">
    <location>
        <position position="128"/>
    </location>
    <ligand>
        <name>orotate</name>
        <dbReference type="ChEBI" id="CHEBI:30839"/>
    </ligand>
</feature>
<feature type="binding site" evidence="1">
    <location>
        <position position="156"/>
    </location>
    <ligand>
        <name>orotate</name>
        <dbReference type="ChEBI" id="CHEBI:30839"/>
    </ligand>
</feature>
<protein>
    <recommendedName>
        <fullName evidence="1">Orotate phosphoribosyltransferase</fullName>
        <shortName evidence="1">OPRT</shortName>
        <shortName evidence="1">OPRTase</shortName>
        <ecNumber evidence="1">2.4.2.10</ecNumber>
    </recommendedName>
</protein>
<dbReference type="EC" id="2.4.2.10" evidence="1"/>
<dbReference type="EMBL" id="CP000934">
    <property type="protein sequence ID" value="ACE85957.1"/>
    <property type="molecule type" value="Genomic_DNA"/>
</dbReference>
<dbReference type="RefSeq" id="WP_012489103.1">
    <property type="nucleotide sequence ID" value="NC_010995.1"/>
</dbReference>
<dbReference type="SMR" id="B3PG74"/>
<dbReference type="STRING" id="498211.CJA_3528"/>
<dbReference type="KEGG" id="cja:CJA_3528"/>
<dbReference type="eggNOG" id="COG0461">
    <property type="taxonomic scope" value="Bacteria"/>
</dbReference>
<dbReference type="HOGENOM" id="CLU_074878_0_1_6"/>
<dbReference type="OrthoDB" id="9779060at2"/>
<dbReference type="UniPathway" id="UPA00070">
    <property type="reaction ID" value="UER00119"/>
</dbReference>
<dbReference type="Proteomes" id="UP000001036">
    <property type="component" value="Chromosome"/>
</dbReference>
<dbReference type="GO" id="GO:0005737">
    <property type="term" value="C:cytoplasm"/>
    <property type="evidence" value="ECO:0007669"/>
    <property type="project" value="TreeGrafter"/>
</dbReference>
<dbReference type="GO" id="GO:0000287">
    <property type="term" value="F:magnesium ion binding"/>
    <property type="evidence" value="ECO:0007669"/>
    <property type="project" value="UniProtKB-UniRule"/>
</dbReference>
<dbReference type="GO" id="GO:0004588">
    <property type="term" value="F:orotate phosphoribosyltransferase activity"/>
    <property type="evidence" value="ECO:0007669"/>
    <property type="project" value="UniProtKB-UniRule"/>
</dbReference>
<dbReference type="GO" id="GO:0006207">
    <property type="term" value="P:'de novo' pyrimidine nucleobase biosynthetic process"/>
    <property type="evidence" value="ECO:0007669"/>
    <property type="project" value="TreeGrafter"/>
</dbReference>
<dbReference type="GO" id="GO:0044205">
    <property type="term" value="P:'de novo' UMP biosynthetic process"/>
    <property type="evidence" value="ECO:0007669"/>
    <property type="project" value="UniProtKB-UniRule"/>
</dbReference>
<dbReference type="GO" id="GO:0046132">
    <property type="term" value="P:pyrimidine ribonucleoside biosynthetic process"/>
    <property type="evidence" value="ECO:0007669"/>
    <property type="project" value="TreeGrafter"/>
</dbReference>
<dbReference type="CDD" id="cd06223">
    <property type="entry name" value="PRTases_typeI"/>
    <property type="match status" value="1"/>
</dbReference>
<dbReference type="FunFam" id="3.40.50.2020:FF:000008">
    <property type="entry name" value="Orotate phosphoribosyltransferase"/>
    <property type="match status" value="1"/>
</dbReference>
<dbReference type="Gene3D" id="3.40.50.2020">
    <property type="match status" value="1"/>
</dbReference>
<dbReference type="HAMAP" id="MF_01208">
    <property type="entry name" value="PyrE"/>
    <property type="match status" value="1"/>
</dbReference>
<dbReference type="InterPro" id="IPR023031">
    <property type="entry name" value="OPRT"/>
</dbReference>
<dbReference type="InterPro" id="IPR004467">
    <property type="entry name" value="Or_phspho_trans_dom"/>
</dbReference>
<dbReference type="InterPro" id="IPR000836">
    <property type="entry name" value="PRibTrfase_dom"/>
</dbReference>
<dbReference type="InterPro" id="IPR029057">
    <property type="entry name" value="PRTase-like"/>
</dbReference>
<dbReference type="NCBIfam" id="TIGR00336">
    <property type="entry name" value="pyrE"/>
    <property type="match status" value="1"/>
</dbReference>
<dbReference type="PANTHER" id="PTHR46683">
    <property type="entry name" value="OROTATE PHOSPHORIBOSYLTRANSFERASE 1-RELATED"/>
    <property type="match status" value="1"/>
</dbReference>
<dbReference type="PANTHER" id="PTHR46683:SF1">
    <property type="entry name" value="OROTATE PHOSPHORIBOSYLTRANSFERASE 1-RELATED"/>
    <property type="match status" value="1"/>
</dbReference>
<dbReference type="Pfam" id="PF00156">
    <property type="entry name" value="Pribosyltran"/>
    <property type="match status" value="1"/>
</dbReference>
<dbReference type="SUPFAM" id="SSF53271">
    <property type="entry name" value="PRTase-like"/>
    <property type="match status" value="1"/>
</dbReference>
<dbReference type="PROSITE" id="PS00103">
    <property type="entry name" value="PUR_PYR_PR_TRANSFER"/>
    <property type="match status" value="1"/>
</dbReference>
<reference key="1">
    <citation type="journal article" date="2008" name="J. Bacteriol.">
        <title>Insights into plant cell wall degradation from the genome sequence of the soil bacterium Cellvibrio japonicus.</title>
        <authorList>
            <person name="DeBoy R.T."/>
            <person name="Mongodin E.F."/>
            <person name="Fouts D.E."/>
            <person name="Tailford L.E."/>
            <person name="Khouri H."/>
            <person name="Emerson J.B."/>
            <person name="Mohamoud Y."/>
            <person name="Watkins K."/>
            <person name="Henrissat B."/>
            <person name="Gilbert H.J."/>
            <person name="Nelson K.E."/>
        </authorList>
    </citation>
    <scope>NUCLEOTIDE SEQUENCE [LARGE SCALE GENOMIC DNA]</scope>
    <source>
        <strain>Ueda107</strain>
    </source>
</reference>
<organism>
    <name type="scientific">Cellvibrio japonicus (strain Ueda107)</name>
    <name type="common">Pseudomonas fluorescens subsp. cellulosa</name>
    <dbReference type="NCBI Taxonomy" id="498211"/>
    <lineage>
        <taxon>Bacteria</taxon>
        <taxon>Pseudomonadati</taxon>
        <taxon>Pseudomonadota</taxon>
        <taxon>Gammaproteobacteria</taxon>
        <taxon>Cellvibrionales</taxon>
        <taxon>Cellvibrionaceae</taxon>
        <taxon>Cellvibrio</taxon>
    </lineage>
</organism>
<evidence type="ECO:0000255" key="1">
    <source>
        <dbReference type="HAMAP-Rule" id="MF_01208"/>
    </source>
</evidence>
<accession>B3PG74</accession>
<gene>
    <name evidence="1" type="primary">pyrE</name>
    <name type="ordered locus">CJA_3528</name>
</gene>